<evidence type="ECO:0000305" key="1"/>
<evidence type="ECO:0000305" key="2">
    <source>
    </source>
</evidence>
<proteinExistence type="uncertain"/>
<feature type="chain" id="PRO_0000299880" description="Putative uncharacterized protein YDR271C">
    <location>
        <begin position="1"/>
        <end position="123"/>
    </location>
</feature>
<dbReference type="EMBL" id="U51030">
    <property type="protein sequence ID" value="AAB64463.1"/>
    <property type="molecule type" value="Genomic_DNA"/>
</dbReference>
<dbReference type="PIR" id="S70222">
    <property type="entry name" value="S70222"/>
</dbReference>
<dbReference type="DIP" id="DIP-3875N"/>
<dbReference type="IntAct" id="P87282">
    <property type="interactions" value="7"/>
</dbReference>
<dbReference type="MINT" id="P87282"/>
<dbReference type="PaxDb" id="4932-YDR271C"/>
<dbReference type="EnsemblFungi" id="YDR271C_mRNA">
    <property type="protein sequence ID" value="YDR271C"/>
    <property type="gene ID" value="YDR271C"/>
</dbReference>
<dbReference type="AGR" id="SGD:S000002679"/>
<dbReference type="SGD" id="S000002679">
    <property type="gene designation" value="YDR271C"/>
</dbReference>
<dbReference type="HOGENOM" id="CLU_2016996_0_0_1"/>
<reference key="1">
    <citation type="journal article" date="1997" name="Nature">
        <title>The nucleotide sequence of Saccharomyces cerevisiae chromosome IV.</title>
        <authorList>
            <person name="Jacq C."/>
            <person name="Alt-Moerbe J."/>
            <person name="Andre B."/>
            <person name="Arnold W."/>
            <person name="Bahr A."/>
            <person name="Ballesta J.P.G."/>
            <person name="Bargues M."/>
            <person name="Baron L."/>
            <person name="Becker A."/>
            <person name="Biteau N."/>
            <person name="Bloecker H."/>
            <person name="Blugeon C."/>
            <person name="Boskovic J."/>
            <person name="Brandt P."/>
            <person name="Brueckner M."/>
            <person name="Buitrago M.J."/>
            <person name="Coster F."/>
            <person name="Delaveau T."/>
            <person name="del Rey F."/>
            <person name="Dujon B."/>
            <person name="Eide L.G."/>
            <person name="Garcia-Cantalejo J.M."/>
            <person name="Goffeau A."/>
            <person name="Gomez-Peris A."/>
            <person name="Granotier C."/>
            <person name="Hanemann V."/>
            <person name="Hankeln T."/>
            <person name="Hoheisel J.D."/>
            <person name="Jaeger W."/>
            <person name="Jimenez A."/>
            <person name="Jonniaux J.-L."/>
            <person name="Kraemer C."/>
            <person name="Kuester H."/>
            <person name="Laamanen P."/>
            <person name="Legros Y."/>
            <person name="Louis E.J."/>
            <person name="Moeller-Rieker S."/>
            <person name="Monnet A."/>
            <person name="Moro M."/>
            <person name="Mueller-Auer S."/>
            <person name="Nussbaumer B."/>
            <person name="Paricio N."/>
            <person name="Paulin L."/>
            <person name="Perea J."/>
            <person name="Perez-Alonso M."/>
            <person name="Perez-Ortin J.E."/>
            <person name="Pohl T.M."/>
            <person name="Prydz H."/>
            <person name="Purnelle B."/>
            <person name="Rasmussen S.W."/>
            <person name="Remacha M.A."/>
            <person name="Revuelta J.L."/>
            <person name="Rieger M."/>
            <person name="Salom D."/>
            <person name="Saluz H.P."/>
            <person name="Saiz J.E."/>
            <person name="Saren A.-M."/>
            <person name="Schaefer M."/>
            <person name="Scharfe M."/>
            <person name="Schmidt E.R."/>
            <person name="Schneider C."/>
            <person name="Scholler P."/>
            <person name="Schwarz S."/>
            <person name="Soler-Mira A."/>
            <person name="Urrestarazu L.A."/>
            <person name="Verhasselt P."/>
            <person name="Vissers S."/>
            <person name="Voet M."/>
            <person name="Volckaert G."/>
            <person name="Wagner G."/>
            <person name="Wambutt R."/>
            <person name="Wedler E."/>
            <person name="Wedler H."/>
            <person name="Woelfl S."/>
            <person name="Harris D.E."/>
            <person name="Bowman S."/>
            <person name="Brown D."/>
            <person name="Churcher C.M."/>
            <person name="Connor R."/>
            <person name="Dedman K."/>
            <person name="Gentles S."/>
            <person name="Hamlin N."/>
            <person name="Hunt S."/>
            <person name="Jones L."/>
            <person name="McDonald S."/>
            <person name="Murphy L.D."/>
            <person name="Niblett D."/>
            <person name="Odell C."/>
            <person name="Oliver K."/>
            <person name="Rajandream M.A."/>
            <person name="Richards C."/>
            <person name="Shore L."/>
            <person name="Walsh S.V."/>
            <person name="Barrell B.G."/>
            <person name="Dietrich F.S."/>
            <person name="Mulligan J.T."/>
            <person name="Allen E."/>
            <person name="Araujo R."/>
            <person name="Aviles E."/>
            <person name="Berno A."/>
            <person name="Carpenter J."/>
            <person name="Chen E."/>
            <person name="Cherry J.M."/>
            <person name="Chung E."/>
            <person name="Duncan M."/>
            <person name="Hunicke-Smith S."/>
            <person name="Hyman R.W."/>
            <person name="Komp C."/>
            <person name="Lashkari D."/>
            <person name="Lew H."/>
            <person name="Lin D."/>
            <person name="Mosedale D."/>
            <person name="Nakahara K."/>
            <person name="Namath A."/>
            <person name="Oefner P."/>
            <person name="Oh C."/>
            <person name="Petel F.X."/>
            <person name="Roberts D."/>
            <person name="Schramm S."/>
            <person name="Schroeder M."/>
            <person name="Shogren T."/>
            <person name="Shroff N."/>
            <person name="Winant A."/>
            <person name="Yelton M.A."/>
            <person name="Botstein D."/>
            <person name="Davis R.W."/>
            <person name="Johnston M."/>
            <person name="Andrews S."/>
            <person name="Brinkman R."/>
            <person name="Cooper J."/>
            <person name="Ding H."/>
            <person name="Du Z."/>
            <person name="Favello A."/>
            <person name="Fulton L."/>
            <person name="Gattung S."/>
            <person name="Greco T."/>
            <person name="Hallsworth K."/>
            <person name="Hawkins J."/>
            <person name="Hillier L.W."/>
            <person name="Jier M."/>
            <person name="Johnson D."/>
            <person name="Johnston L."/>
            <person name="Kirsten J."/>
            <person name="Kucaba T."/>
            <person name="Langston Y."/>
            <person name="Latreille P."/>
            <person name="Le T."/>
            <person name="Mardis E."/>
            <person name="Menezes S."/>
            <person name="Miller N."/>
            <person name="Nhan M."/>
            <person name="Pauley A."/>
            <person name="Peluso D."/>
            <person name="Rifkin L."/>
            <person name="Riles L."/>
            <person name="Taich A."/>
            <person name="Trevaskis E."/>
            <person name="Vignati D."/>
            <person name="Wilcox L."/>
            <person name="Wohldman P."/>
            <person name="Vaudin M."/>
            <person name="Wilson R."/>
            <person name="Waterston R."/>
            <person name="Albermann K."/>
            <person name="Hani J."/>
            <person name="Heumann K."/>
            <person name="Kleine K."/>
            <person name="Mewes H.-W."/>
            <person name="Zollner A."/>
            <person name="Zaccaria P."/>
        </authorList>
    </citation>
    <scope>NUCLEOTIDE SEQUENCE [LARGE SCALE GENOMIC DNA]</scope>
    <source>
        <strain>ATCC 204508 / S288c</strain>
    </source>
</reference>
<reference key="2">
    <citation type="journal article" date="2014" name="G3 (Bethesda)">
        <title>The reference genome sequence of Saccharomyces cerevisiae: Then and now.</title>
        <authorList>
            <person name="Engel S.R."/>
            <person name="Dietrich F.S."/>
            <person name="Fisk D.G."/>
            <person name="Binkley G."/>
            <person name="Balakrishnan R."/>
            <person name="Costanzo M.C."/>
            <person name="Dwight S.S."/>
            <person name="Hitz B.C."/>
            <person name="Karra K."/>
            <person name="Nash R.S."/>
            <person name="Weng S."/>
            <person name="Wong E.D."/>
            <person name="Lloyd P."/>
            <person name="Skrzypek M.S."/>
            <person name="Miyasato S.R."/>
            <person name="Simison M."/>
            <person name="Cherry J.M."/>
        </authorList>
    </citation>
    <scope>GENOME REANNOTATION</scope>
    <source>
        <strain>ATCC 204508 / S288c</strain>
    </source>
</reference>
<gene>
    <name type="ordered locus">YDR271C</name>
</gene>
<organism>
    <name type="scientific">Saccharomyces cerevisiae (strain ATCC 204508 / S288c)</name>
    <name type="common">Baker's yeast</name>
    <dbReference type="NCBI Taxonomy" id="559292"/>
    <lineage>
        <taxon>Eukaryota</taxon>
        <taxon>Fungi</taxon>
        <taxon>Dikarya</taxon>
        <taxon>Ascomycota</taxon>
        <taxon>Saccharomycotina</taxon>
        <taxon>Saccharomycetes</taxon>
        <taxon>Saccharomycetales</taxon>
        <taxon>Saccharomycetaceae</taxon>
        <taxon>Saccharomyces</taxon>
    </lineage>
</organism>
<comment type="miscellaneous">
    <text evidence="1">Partially overlaps CCC2.</text>
</comment>
<comment type="caution">
    <text evidence="2">Product of a dubious gene prediction unlikely to encode a functional protein. Because of that it is not part of the S.cerevisiae S288c complete/reference proteome set.</text>
</comment>
<name>YD271_YEAST</name>
<sequence>MNINYYYCYKSICSWIFLNKLDLPVIYKTSSFDISPACDSMSCSPAIARVEKSLDQKFPIENLDLKSEIPCDSISGGVHFFNINELRTTLTELNAIAKPASIGGRVMPQGMSTPIAIGIMNIL</sequence>
<protein>
    <recommendedName>
        <fullName>Putative uncharacterized protein YDR271C</fullName>
    </recommendedName>
</protein>
<accession>P87282</accession>